<accession>C0HJU7</accession>
<sequence length="56" mass="6157">RGICLEPKVVGPCKARIRRFYYDSETGKCTPFIYGGCGGNGNNFETLHACRGICRA</sequence>
<evidence type="ECO:0000250" key="1">
    <source>
        <dbReference type="UniProtKB" id="P00974"/>
    </source>
</evidence>
<evidence type="ECO:0000250" key="2">
    <source>
        <dbReference type="UniProtKB" id="P31713"/>
    </source>
</evidence>
<evidence type="ECO:0000255" key="3">
    <source>
        <dbReference type="PROSITE-ProRule" id="PRU00031"/>
    </source>
</evidence>
<evidence type="ECO:0000269" key="4">
    <source>
    </source>
</evidence>
<evidence type="ECO:0000269" key="5">
    <source>
    </source>
</evidence>
<evidence type="ECO:0000303" key="6">
    <source>
    </source>
</evidence>
<evidence type="ECO:0000303" key="7">
    <source>
    </source>
</evidence>
<evidence type="ECO:0000305" key="8"/>
<dbReference type="SMR" id="C0HJU7"/>
<dbReference type="GO" id="GO:0005615">
    <property type="term" value="C:extracellular space"/>
    <property type="evidence" value="ECO:0007669"/>
    <property type="project" value="TreeGrafter"/>
</dbReference>
<dbReference type="GO" id="GO:0042151">
    <property type="term" value="C:nematocyst"/>
    <property type="evidence" value="ECO:0007669"/>
    <property type="project" value="UniProtKB-SubCell"/>
</dbReference>
<dbReference type="GO" id="GO:0015459">
    <property type="term" value="F:potassium channel regulator activity"/>
    <property type="evidence" value="ECO:0007669"/>
    <property type="project" value="UniProtKB-KW"/>
</dbReference>
<dbReference type="GO" id="GO:0004867">
    <property type="term" value="F:serine-type endopeptidase inhibitor activity"/>
    <property type="evidence" value="ECO:0007669"/>
    <property type="project" value="UniProtKB-KW"/>
</dbReference>
<dbReference type="GO" id="GO:0090729">
    <property type="term" value="F:toxin activity"/>
    <property type="evidence" value="ECO:0007669"/>
    <property type="project" value="UniProtKB-KW"/>
</dbReference>
<dbReference type="CDD" id="cd22618">
    <property type="entry name" value="Kunitz_SHPI"/>
    <property type="match status" value="1"/>
</dbReference>
<dbReference type="FunFam" id="4.10.410.10:FF:000021">
    <property type="entry name" value="Serine protease inhibitor, putative"/>
    <property type="match status" value="1"/>
</dbReference>
<dbReference type="Gene3D" id="4.10.410.10">
    <property type="entry name" value="Pancreatic trypsin inhibitor Kunitz domain"/>
    <property type="match status" value="1"/>
</dbReference>
<dbReference type="InterPro" id="IPR002223">
    <property type="entry name" value="Kunitz_BPTI"/>
</dbReference>
<dbReference type="InterPro" id="IPR036880">
    <property type="entry name" value="Kunitz_BPTI_sf"/>
</dbReference>
<dbReference type="InterPro" id="IPR020901">
    <property type="entry name" value="Prtase_inh_Kunz-CS"/>
</dbReference>
<dbReference type="InterPro" id="IPR050098">
    <property type="entry name" value="TFPI/VKTCI-like"/>
</dbReference>
<dbReference type="PANTHER" id="PTHR10083:SF374">
    <property type="entry name" value="BPTI_KUNITZ INHIBITOR DOMAIN-CONTAINING PROTEIN"/>
    <property type="match status" value="1"/>
</dbReference>
<dbReference type="PANTHER" id="PTHR10083">
    <property type="entry name" value="KUNITZ-TYPE PROTEASE INHIBITOR-RELATED"/>
    <property type="match status" value="1"/>
</dbReference>
<dbReference type="Pfam" id="PF00014">
    <property type="entry name" value="Kunitz_BPTI"/>
    <property type="match status" value="1"/>
</dbReference>
<dbReference type="PRINTS" id="PR00759">
    <property type="entry name" value="BASICPTASE"/>
</dbReference>
<dbReference type="SMART" id="SM00131">
    <property type="entry name" value="KU"/>
    <property type="match status" value="1"/>
</dbReference>
<dbReference type="SUPFAM" id="SSF57362">
    <property type="entry name" value="BPTI-like"/>
    <property type="match status" value="1"/>
</dbReference>
<dbReference type="PROSITE" id="PS00280">
    <property type="entry name" value="BPTI_KUNITZ_1"/>
    <property type="match status" value="1"/>
</dbReference>
<dbReference type="PROSITE" id="PS50279">
    <property type="entry name" value="BPTI_KUNITZ_2"/>
    <property type="match status" value="1"/>
</dbReference>
<protein>
    <recommendedName>
        <fullName evidence="8">PI-stichotoxin-Hcr2g</fullName>
        <shortName evidence="8">PI-SHTX-Hcr2g</shortName>
    </recommendedName>
    <alternativeName>
        <fullName evidence="6 7">Kunitz-type serine protease inhibitor HCRG2</fullName>
    </alternativeName>
</protein>
<comment type="function">
    <text evidence="4 5">Dual-function toxin that inhibits both serine proteases and voltage-gated potassium channels (PubMed:26404319, PubMed:33158163). Has potent activity on both trypsin (Ki=50 nM) and chymotrypsin (Kd=1.6 nM) (PubMed:26404319). Shows inhibitory activity against 5 of the 7 potassium channels tested (rKv1.1/KCNA1; IC(50)=12.6, hKv1.2/KCNA2; IC(50)=181.7, hKv1.3/KCNA3; IC(50)=29.7, rKv1.6/KCNA6; IC(50)=43.9, drosophila Shaker; IC(50)=114.9) (PubMed:33158163). Has an anti-inflammatory effect in LPS-activated macrophages in vitro, specifically reducing release of TNF and IL6 but not nitric oxide and reducing expression of IL1B precursor (PubMed:26404319). In contrast to some paralogs, this protein decreases reactive oxygen species (ROS) level in the oxidative stress agent 6-hydroxydopamine (6-OHDA)-induced neurotoxicity model, but does not show cytoprotective activity on neuroblastoma cells (PubMed:33802055). This protein also shows a weak free-radical scavenging activity (PubMed:33802055).</text>
</comment>
<comment type="subcellular location">
    <subcellularLocation>
        <location evidence="8">Secreted</location>
    </subcellularLocation>
    <subcellularLocation>
        <location evidence="8">Nematocyst</location>
    </subcellularLocation>
</comment>
<comment type="PTM">
    <text evidence="4">Contains 3 disulfide bonds.</text>
</comment>
<comment type="mass spectrometry" mass="6148.0" method="MALDI" evidence="4 5"/>
<comment type="miscellaneous">
    <text evidence="4 5">Negative results: does not bind to and, hence, probably does not inhibit serine proteases plasmin, kallikrein and thrombin (PubMed:26404319). Has no activity on Kv1.4/KCNA4 and Kv1.5/KCNA5 (PubMed:33158163).</text>
</comment>
<comment type="miscellaneous">
    <text evidence="8">A synonymy between H.magnifica and R.crispa is controversial.</text>
</comment>
<comment type="similarity">
    <text evidence="8">Belongs to the venom Kunitz-type family. Sea anemone type 2 potassium channel toxin subfamily.</text>
</comment>
<reference key="1">
    <citation type="journal article" date="2015" name="Mar. Drugs">
        <title>New Kunitz-type HCRG polypeptides from the sea anemone Heteractis crispa.</title>
        <authorList>
            <person name="Gladkikh I."/>
            <person name="Monastyrnaya M."/>
            <person name="Zelepuga E."/>
            <person name="Sintsova O."/>
            <person name="Tabakmakher V."/>
            <person name="Gnedenko O."/>
            <person name="Ivanov A."/>
            <person name="Hua K.F."/>
            <person name="Kozlovskaya E."/>
        </authorList>
    </citation>
    <scope>PROTEIN SEQUENCE</scope>
    <scope>FUNCTION</scope>
    <scope>SUBCELLULAR LOCATION</scope>
    <scope>MASS SPECTROMETRY</scope>
    <scope>PRESENCE OF DISULFIDE BONDS</scope>
    <scope>3D-STRUCTURE MODELING</scope>
</reference>
<reference key="2">
    <citation type="journal article" date="2020" name="Biomedicines">
        <title>Kunitz-type peptides from the sea anemone Heteractis crispa demonstrate potassium channel blocking and anti-inflammatory activities.</title>
        <authorList>
            <person name="Gladkikh I."/>
            <person name="Peigneur S."/>
            <person name="Sintsova O."/>
            <person name="Lopes Pinheiro-Junior E."/>
            <person name="Klimovich A."/>
            <person name="Menshov A."/>
            <person name="Kalinovsky A."/>
            <person name="Isaeva M."/>
            <person name="Monastyrnaya M."/>
            <person name="Kozlovskaya E."/>
            <person name="Tytgat J."/>
            <person name="Leychenko E."/>
        </authorList>
    </citation>
    <scope>FUNCTION</scope>
    <scope>MASS SPECTROMETRY</scope>
    <scope>3D-STRUCTURE MODELING</scope>
</reference>
<reference key="3">
    <citation type="journal article" date="2021" name="Biomedicines">
        <title>Sea anemone kunitz-type peptides demonstrate neuroprotective activity in the 6-hydroxydopamine induced neurotoxicity model.</title>
        <authorList>
            <person name="Sintsova O."/>
            <person name="Gladkikh I."/>
            <person name="Monastyrnaya M."/>
            <person name="Tabakmakher V."/>
            <person name="Yurchenko E."/>
            <person name="Menchinskaya E."/>
            <person name="Pislyagin E."/>
            <person name="Andreev Y."/>
            <person name="Kozlov S."/>
            <person name="Peigneur S."/>
            <person name="Tytgat J."/>
            <person name="Aminin D."/>
            <person name="Kozlovskaya E."/>
            <person name="Leychenko E."/>
        </authorList>
    </citation>
    <scope>FUNCTION</scope>
</reference>
<organism>
    <name type="scientific">Radianthus crispa</name>
    <name type="common">Leathery sea anemone</name>
    <name type="synonym">Heteractis crispa</name>
    <dbReference type="NCBI Taxonomy" id="3122430"/>
    <lineage>
        <taxon>Eukaryota</taxon>
        <taxon>Metazoa</taxon>
        <taxon>Cnidaria</taxon>
        <taxon>Anthozoa</taxon>
        <taxon>Hexacorallia</taxon>
        <taxon>Actiniaria</taxon>
        <taxon>Stichodactylidae</taxon>
        <taxon>Radianthus</taxon>
    </lineage>
</organism>
<proteinExistence type="evidence at protein level"/>
<name>VKT2G_RADCR</name>
<keyword id="KW-0903">Direct protein sequencing</keyword>
<keyword id="KW-1015">Disulfide bond</keyword>
<keyword id="KW-0872">Ion channel impairing toxin</keyword>
<keyword id="KW-0166">Nematocyst</keyword>
<keyword id="KW-0632">Potassium channel impairing toxin</keyword>
<keyword id="KW-0646">Protease inhibitor</keyword>
<keyword id="KW-0964">Secreted</keyword>
<keyword id="KW-0722">Serine protease inhibitor</keyword>
<keyword id="KW-0800">Toxin</keyword>
<keyword id="KW-1220">Voltage-gated potassium channel impairing toxin</keyword>
<feature type="chain" id="PRO_0000434950" description="PI-stichotoxin-Hcr2g" evidence="4">
    <location>
        <begin position="1"/>
        <end position="56"/>
    </location>
</feature>
<feature type="domain" description="BPTI/Kunitz inhibitor" evidence="3">
    <location>
        <begin position="4"/>
        <end position="54"/>
    </location>
</feature>
<feature type="site" description="Reactive bond for trypsin" evidence="1">
    <location>
        <begin position="14"/>
        <end position="15"/>
    </location>
</feature>
<feature type="disulfide bond" evidence="2">
    <location>
        <begin position="4"/>
        <end position="54"/>
    </location>
</feature>
<feature type="disulfide bond" evidence="2">
    <location>
        <begin position="13"/>
        <end position="37"/>
    </location>
</feature>
<feature type="disulfide bond" evidence="2">
    <location>
        <begin position="29"/>
        <end position="50"/>
    </location>
</feature>